<feature type="chain" id="PRO_0000173150" description="Large ribosomal subunit protein bL31">
    <location>
        <begin position="1"/>
        <end position="73"/>
    </location>
</feature>
<sequence length="73" mass="8229">MKSAIHPDYHTIKVVMTDGTEYTTRSTWGKEGDTMNLDIDPTTHPAWTGGQQTLLDRGGRLSKFKKRFEGFGL</sequence>
<reference key="1">
    <citation type="journal article" date="2000" name="DNA Res.">
        <title>Complete genome structure of the nitrogen-fixing symbiotic bacterium Mesorhizobium loti.</title>
        <authorList>
            <person name="Kaneko T."/>
            <person name="Nakamura Y."/>
            <person name="Sato S."/>
            <person name="Asamizu E."/>
            <person name="Kato T."/>
            <person name="Sasamoto S."/>
            <person name="Watanabe A."/>
            <person name="Idesawa K."/>
            <person name="Ishikawa A."/>
            <person name="Kawashima K."/>
            <person name="Kimura T."/>
            <person name="Kishida Y."/>
            <person name="Kiyokawa C."/>
            <person name="Kohara M."/>
            <person name="Matsumoto M."/>
            <person name="Matsuno A."/>
            <person name="Mochizuki Y."/>
            <person name="Nakayama S."/>
            <person name="Nakazaki N."/>
            <person name="Shimpo S."/>
            <person name="Sugimoto M."/>
            <person name="Takeuchi C."/>
            <person name="Yamada M."/>
            <person name="Tabata S."/>
        </authorList>
    </citation>
    <scope>NUCLEOTIDE SEQUENCE [LARGE SCALE GENOMIC DNA]</scope>
    <source>
        <strain>LMG 29417 / CECT 9101 / MAFF 303099</strain>
    </source>
</reference>
<dbReference type="EMBL" id="BA000012">
    <property type="protein sequence ID" value="BAB50717.1"/>
    <property type="molecule type" value="Genomic_DNA"/>
</dbReference>
<dbReference type="RefSeq" id="WP_010912060.1">
    <property type="nucleotide sequence ID" value="NC_002678.2"/>
</dbReference>
<dbReference type="SMR" id="Q98F50"/>
<dbReference type="GeneID" id="90988805"/>
<dbReference type="KEGG" id="mlo:msr3935"/>
<dbReference type="eggNOG" id="COG0254">
    <property type="taxonomic scope" value="Bacteria"/>
</dbReference>
<dbReference type="HOGENOM" id="CLU_114306_3_2_5"/>
<dbReference type="Proteomes" id="UP000000552">
    <property type="component" value="Chromosome"/>
</dbReference>
<dbReference type="GO" id="GO:1990904">
    <property type="term" value="C:ribonucleoprotein complex"/>
    <property type="evidence" value="ECO:0007669"/>
    <property type="project" value="UniProtKB-KW"/>
</dbReference>
<dbReference type="GO" id="GO:0005840">
    <property type="term" value="C:ribosome"/>
    <property type="evidence" value="ECO:0007669"/>
    <property type="project" value="UniProtKB-KW"/>
</dbReference>
<dbReference type="GO" id="GO:0019843">
    <property type="term" value="F:rRNA binding"/>
    <property type="evidence" value="ECO:0007669"/>
    <property type="project" value="UniProtKB-KW"/>
</dbReference>
<dbReference type="GO" id="GO:0003735">
    <property type="term" value="F:structural constituent of ribosome"/>
    <property type="evidence" value="ECO:0007669"/>
    <property type="project" value="InterPro"/>
</dbReference>
<dbReference type="GO" id="GO:0006412">
    <property type="term" value="P:translation"/>
    <property type="evidence" value="ECO:0007669"/>
    <property type="project" value="UniProtKB-UniRule"/>
</dbReference>
<dbReference type="Gene3D" id="4.10.830.30">
    <property type="entry name" value="Ribosomal protein L31"/>
    <property type="match status" value="1"/>
</dbReference>
<dbReference type="HAMAP" id="MF_00501">
    <property type="entry name" value="Ribosomal_bL31_1"/>
    <property type="match status" value="1"/>
</dbReference>
<dbReference type="InterPro" id="IPR034704">
    <property type="entry name" value="Ribosomal_bL28/bL31-like_sf"/>
</dbReference>
<dbReference type="InterPro" id="IPR002150">
    <property type="entry name" value="Ribosomal_bL31"/>
</dbReference>
<dbReference type="InterPro" id="IPR027491">
    <property type="entry name" value="Ribosomal_bL31_A"/>
</dbReference>
<dbReference type="InterPro" id="IPR042105">
    <property type="entry name" value="Ribosomal_bL31_sf"/>
</dbReference>
<dbReference type="NCBIfam" id="TIGR00105">
    <property type="entry name" value="L31"/>
    <property type="match status" value="1"/>
</dbReference>
<dbReference type="NCBIfam" id="NF001809">
    <property type="entry name" value="PRK00528.1"/>
    <property type="match status" value="1"/>
</dbReference>
<dbReference type="PANTHER" id="PTHR33280">
    <property type="entry name" value="50S RIBOSOMAL PROTEIN L31, CHLOROPLASTIC"/>
    <property type="match status" value="1"/>
</dbReference>
<dbReference type="PANTHER" id="PTHR33280:SF6">
    <property type="entry name" value="LARGE RIBOSOMAL SUBUNIT PROTEIN BL31A"/>
    <property type="match status" value="1"/>
</dbReference>
<dbReference type="Pfam" id="PF01197">
    <property type="entry name" value="Ribosomal_L31"/>
    <property type="match status" value="1"/>
</dbReference>
<dbReference type="PRINTS" id="PR01249">
    <property type="entry name" value="RIBOSOMALL31"/>
</dbReference>
<dbReference type="SUPFAM" id="SSF143800">
    <property type="entry name" value="L28p-like"/>
    <property type="match status" value="1"/>
</dbReference>
<dbReference type="PROSITE" id="PS01143">
    <property type="entry name" value="RIBOSOMAL_L31"/>
    <property type="match status" value="1"/>
</dbReference>
<comment type="function">
    <text evidence="1">Binds the 23S rRNA.</text>
</comment>
<comment type="subunit">
    <text evidence="1">Part of the 50S ribosomal subunit.</text>
</comment>
<comment type="similarity">
    <text evidence="1">Belongs to the bacterial ribosomal protein bL31 family. Type A subfamily.</text>
</comment>
<organism>
    <name type="scientific">Mesorhizobium japonicum (strain LMG 29417 / CECT 9101 / MAFF 303099)</name>
    <name type="common">Mesorhizobium loti (strain MAFF 303099)</name>
    <dbReference type="NCBI Taxonomy" id="266835"/>
    <lineage>
        <taxon>Bacteria</taxon>
        <taxon>Pseudomonadati</taxon>
        <taxon>Pseudomonadota</taxon>
        <taxon>Alphaproteobacteria</taxon>
        <taxon>Hyphomicrobiales</taxon>
        <taxon>Phyllobacteriaceae</taxon>
        <taxon>Mesorhizobium</taxon>
    </lineage>
</organism>
<protein>
    <recommendedName>
        <fullName evidence="1">Large ribosomal subunit protein bL31</fullName>
    </recommendedName>
    <alternativeName>
        <fullName evidence="2">50S ribosomal protein L31</fullName>
    </alternativeName>
</protein>
<gene>
    <name evidence="1" type="primary">rpmE</name>
    <name type="ordered locus">msr3935</name>
</gene>
<evidence type="ECO:0000255" key="1">
    <source>
        <dbReference type="HAMAP-Rule" id="MF_00501"/>
    </source>
</evidence>
<evidence type="ECO:0000305" key="2"/>
<keyword id="KW-0687">Ribonucleoprotein</keyword>
<keyword id="KW-0689">Ribosomal protein</keyword>
<keyword id="KW-0694">RNA-binding</keyword>
<keyword id="KW-0699">rRNA-binding</keyword>
<proteinExistence type="inferred from homology"/>
<accession>Q98F50</accession>
<name>RL31_RHILO</name>